<feature type="chain" id="PRO_0000437221" description="Fluoride export protein 1">
    <location>
        <begin position="1"/>
        <end position="390"/>
    </location>
</feature>
<feature type="topological domain" description="Cytoplasmic" evidence="1">
    <location>
        <begin position="1"/>
        <end position="72"/>
    </location>
</feature>
<feature type="transmembrane region" description="Helical" evidence="2">
    <location>
        <begin position="73"/>
        <end position="93"/>
    </location>
</feature>
<feature type="topological domain" description="Extracellular" evidence="1">
    <location>
        <begin position="94"/>
        <end position="100"/>
    </location>
</feature>
<feature type="transmembrane region" description="Helical" evidence="2">
    <location>
        <begin position="101"/>
        <end position="121"/>
    </location>
</feature>
<feature type="topological domain" description="Cytoplasmic" evidence="1">
    <location>
        <begin position="122"/>
        <end position="143"/>
    </location>
</feature>
<feature type="transmembrane region" description="Helical" evidence="2">
    <location>
        <begin position="144"/>
        <end position="164"/>
    </location>
</feature>
<feature type="topological domain" description="Extracellular" evidence="1">
    <location>
        <begin position="165"/>
        <end position="185"/>
    </location>
</feature>
<feature type="transmembrane region" description="Helical" evidence="2">
    <location>
        <begin position="186"/>
        <end position="206"/>
    </location>
</feature>
<feature type="topological domain" description="Cytoplasmic" evidence="1">
    <location>
        <begin position="207"/>
        <end position="229"/>
    </location>
</feature>
<feature type="transmembrane region" description="Helical" evidence="2">
    <location>
        <begin position="230"/>
        <end position="250"/>
    </location>
</feature>
<feature type="topological domain" description="Extracellular" evidence="1">
    <location>
        <begin position="251"/>
        <end position="256"/>
    </location>
</feature>
<feature type="transmembrane region" description="Helical" evidence="2">
    <location>
        <begin position="257"/>
        <end position="279"/>
    </location>
</feature>
<feature type="topological domain" description="Cytoplasmic" evidence="1">
    <location>
        <begin position="280"/>
        <end position="290"/>
    </location>
</feature>
<feature type="transmembrane region" description="Helical" evidence="2">
    <location>
        <begin position="291"/>
        <end position="311"/>
    </location>
</feature>
<feature type="topological domain" description="Extracellular" evidence="1">
    <location>
        <begin position="312"/>
        <end position="338"/>
    </location>
</feature>
<feature type="transmembrane region" description="Helical" evidence="2">
    <location>
        <begin position="339"/>
        <end position="359"/>
    </location>
</feature>
<feature type="topological domain" description="Cytoplasmic" evidence="1">
    <location>
        <begin position="360"/>
        <end position="368"/>
    </location>
</feature>
<feature type="transmembrane region" description="Helical" evidence="2">
    <location>
        <begin position="369"/>
        <end position="389"/>
    </location>
</feature>
<feature type="topological domain" description="Extracellular" evidence="1">
    <location>
        <position position="390"/>
    </location>
</feature>
<feature type="region of interest" description="Disordered" evidence="3">
    <location>
        <begin position="1"/>
        <end position="22"/>
    </location>
</feature>
<name>FEX1_CANAL</name>
<reference key="1">
    <citation type="journal article" date="2005" name="Genetics">
        <title>Sequence finishing and gene mapping for Candida albicans chromosome 7 and syntenic analysis against the Saccharomyces cerevisiae genome.</title>
        <authorList>
            <person name="Chibana H."/>
            <person name="Oka N."/>
            <person name="Nakayama H."/>
            <person name="Aoyama T."/>
            <person name="Magee B.B."/>
            <person name="Magee P.T."/>
            <person name="Mikami Y."/>
        </authorList>
    </citation>
    <scope>NUCLEOTIDE SEQUENCE [LARGE SCALE GENOMIC DNA]</scope>
    <source>
        <strain>SC5314 / ATCC MYA-2876</strain>
    </source>
</reference>
<reference key="2">
    <citation type="journal article" date="2004" name="Proc. Natl. Acad. Sci. U.S.A.">
        <title>The diploid genome sequence of Candida albicans.</title>
        <authorList>
            <person name="Jones T."/>
            <person name="Federspiel N.A."/>
            <person name="Chibana H."/>
            <person name="Dungan J."/>
            <person name="Kalman S."/>
            <person name="Magee B.B."/>
            <person name="Newport G."/>
            <person name="Thorstenson Y.R."/>
            <person name="Agabian N."/>
            <person name="Magee P.T."/>
            <person name="Davis R.W."/>
            <person name="Scherer S."/>
        </authorList>
    </citation>
    <scope>NUCLEOTIDE SEQUENCE [LARGE SCALE GENOMIC DNA]</scope>
    <source>
        <strain>SC5314 / ATCC MYA-2876</strain>
    </source>
</reference>
<reference key="3">
    <citation type="journal article" date="2007" name="Genome Biol.">
        <title>Assembly of the Candida albicans genome into sixteen supercontigs aligned on the eight chromosomes.</title>
        <authorList>
            <person name="van het Hoog M."/>
            <person name="Rast T.J."/>
            <person name="Martchenko M."/>
            <person name="Grindle S."/>
            <person name="Dignard D."/>
            <person name="Hogues H."/>
            <person name="Cuomo C."/>
            <person name="Berriman M."/>
            <person name="Scherer S."/>
            <person name="Magee B.B."/>
            <person name="Whiteway M."/>
            <person name="Chibana H."/>
            <person name="Nantel A."/>
            <person name="Magee P.T."/>
        </authorList>
    </citation>
    <scope>GENOME REANNOTATION</scope>
    <source>
        <strain>SC5314 / ATCC MYA-2876</strain>
    </source>
</reference>
<reference key="4">
    <citation type="journal article" date="2013" name="Genome Biol.">
        <title>Assembly of a phased diploid Candida albicans genome facilitates allele-specific measurements and provides a simple model for repeat and indel structure.</title>
        <authorList>
            <person name="Muzzey D."/>
            <person name="Schwartz K."/>
            <person name="Weissman J.S."/>
            <person name="Sherlock G."/>
        </authorList>
    </citation>
    <scope>NUCLEOTIDE SEQUENCE [LARGE SCALE GENOMIC DNA]</scope>
    <scope>GENOME REANNOTATION</scope>
    <source>
        <strain>SC5314 / ATCC MYA-2876</strain>
    </source>
</reference>
<reference key="5">
    <citation type="journal article" date="2013" name="Proc. Natl. Acad. Sci. U.S.A.">
        <title>Eukaryotic resistance to fluoride toxicity mediated by a widespread family of fluoride export proteins.</title>
        <authorList>
            <person name="Li S."/>
            <person name="Smith K.D."/>
            <person name="Davis J.H."/>
            <person name="Gordon P.B."/>
            <person name="Breaker R.R."/>
            <person name="Strobel S.A."/>
        </authorList>
    </citation>
    <scope>FUNCTION</scope>
    <scope>DISRUPTION PHENOTYPE</scope>
</reference>
<dbReference type="EMBL" id="AP006852">
    <property type="protein sequence ID" value="BAE44558.1"/>
    <property type="molecule type" value="Genomic_DNA"/>
</dbReference>
<dbReference type="EMBL" id="CP017629">
    <property type="protein sequence ID" value="AOW30406.1"/>
    <property type="molecule type" value="Genomic_DNA"/>
</dbReference>
<dbReference type="RefSeq" id="XP_720386.1">
    <property type="nucleotide sequence ID" value="XM_715293.1"/>
</dbReference>
<dbReference type="SMR" id="Q5AFH3"/>
<dbReference type="FunCoup" id="Q5AFH3">
    <property type="interactions" value="140"/>
</dbReference>
<dbReference type="STRING" id="237561.Q5AFH3"/>
<dbReference type="EnsemblFungi" id="C7_00270W_A-T">
    <property type="protein sequence ID" value="C7_00270W_A-T-p1"/>
    <property type="gene ID" value="C7_00270W_A"/>
</dbReference>
<dbReference type="GeneID" id="3637977"/>
<dbReference type="KEGG" id="cal:CAALFM_C700270WA"/>
<dbReference type="CGD" id="CAL0000174776">
    <property type="gene designation" value="orf19.7095"/>
</dbReference>
<dbReference type="VEuPathDB" id="FungiDB:C7_00270W_A"/>
<dbReference type="eggNOG" id="ENOG502RZ3R">
    <property type="taxonomic scope" value="Eukaryota"/>
</dbReference>
<dbReference type="HOGENOM" id="CLU_030507_1_2_1"/>
<dbReference type="InParanoid" id="Q5AFH3"/>
<dbReference type="OMA" id="CYDLQHV"/>
<dbReference type="OrthoDB" id="409792at2759"/>
<dbReference type="Proteomes" id="UP000000559">
    <property type="component" value="Chromosome 7"/>
</dbReference>
<dbReference type="GO" id="GO:0005886">
    <property type="term" value="C:plasma membrane"/>
    <property type="evidence" value="ECO:0000318"/>
    <property type="project" value="GO_Central"/>
</dbReference>
<dbReference type="GO" id="GO:1903425">
    <property type="term" value="F:fluoride transmembrane transporter activity"/>
    <property type="evidence" value="ECO:0000318"/>
    <property type="project" value="GO_Central"/>
</dbReference>
<dbReference type="GO" id="GO:1903424">
    <property type="term" value="P:fluoride transmembrane transport"/>
    <property type="evidence" value="ECO:0000318"/>
    <property type="project" value="GO_Central"/>
</dbReference>
<dbReference type="InterPro" id="IPR003691">
    <property type="entry name" value="FluC"/>
</dbReference>
<dbReference type="PANTHER" id="PTHR28259">
    <property type="entry name" value="FLUORIDE EXPORT PROTEIN 1-RELATED"/>
    <property type="match status" value="1"/>
</dbReference>
<dbReference type="PANTHER" id="PTHR28259:SF1">
    <property type="entry name" value="FLUORIDE EXPORT PROTEIN 1-RELATED"/>
    <property type="match status" value="1"/>
</dbReference>
<dbReference type="Pfam" id="PF02537">
    <property type="entry name" value="CRCB"/>
    <property type="match status" value="2"/>
</dbReference>
<protein>
    <recommendedName>
        <fullName evidence="5">Fluoride export protein 1</fullName>
    </recommendedName>
</protein>
<keyword id="KW-1003">Cell membrane</keyword>
<keyword id="KW-0472">Membrane</keyword>
<keyword id="KW-1185">Reference proteome</keyword>
<keyword id="KW-0812">Transmembrane</keyword>
<keyword id="KW-1133">Transmembrane helix</keyword>
<comment type="function">
    <text evidence="4">Fluoride channel required for the rapid expulsion of cytoplasmic fluoride.</text>
</comment>
<comment type="catalytic activity">
    <reaction evidence="7">
        <text>fluoride(in) = fluoride(out)</text>
        <dbReference type="Rhea" id="RHEA:76159"/>
        <dbReference type="ChEBI" id="CHEBI:17051"/>
    </reaction>
    <physiologicalReaction direction="left-to-right" evidence="7">
        <dbReference type="Rhea" id="RHEA:76160"/>
    </physiologicalReaction>
</comment>
<comment type="subcellular location">
    <subcellularLocation>
        <location evidence="1">Cell membrane</location>
        <topology evidence="2">Multi-pass membrane protein</topology>
    </subcellularLocation>
</comment>
<comment type="disruption phenotype">
    <text evidence="4">Highly sensible to fluoride. Growth is inhibited at more than a 300-fold lower fluoride concentration than in the wild-type. Has increased intracellular fluoride concentrations.</text>
</comment>
<comment type="similarity">
    <text evidence="6">Belongs to the fluoride channel Fluc/FEX (TC 1.A.43) family.</text>
</comment>
<organism>
    <name type="scientific">Candida albicans (strain SC5314 / ATCC MYA-2876)</name>
    <name type="common">Yeast</name>
    <dbReference type="NCBI Taxonomy" id="237561"/>
    <lineage>
        <taxon>Eukaryota</taxon>
        <taxon>Fungi</taxon>
        <taxon>Dikarya</taxon>
        <taxon>Ascomycota</taxon>
        <taxon>Saccharomycotina</taxon>
        <taxon>Pichiomycetes</taxon>
        <taxon>Debaryomycetaceae</taxon>
        <taxon>Candida/Lodderomyces clade</taxon>
        <taxon>Candida</taxon>
    </lineage>
</organism>
<evidence type="ECO:0000250" key="1">
    <source>
        <dbReference type="UniProtKB" id="Q08913"/>
    </source>
</evidence>
<evidence type="ECO:0000255" key="2"/>
<evidence type="ECO:0000256" key="3">
    <source>
        <dbReference type="SAM" id="MobiDB-lite"/>
    </source>
</evidence>
<evidence type="ECO:0000269" key="4">
    <source>
    </source>
</evidence>
<evidence type="ECO:0000303" key="5">
    <source>
    </source>
</evidence>
<evidence type="ECO:0000305" key="6"/>
<evidence type="ECO:0000305" key="7">
    <source>
    </source>
</evidence>
<gene>
    <name evidence="5" type="primary">FEX1</name>
    <name type="ordered locus">CAALFM_C700270WA</name>
    <name type="ORF">CaO19.7095</name>
    <name type="ORF">orf19.7095</name>
</gene>
<accession>Q5AFH3</accession>
<accession>A0A1D8PQJ4</accession>
<accession>G1U9W9</accession>
<accession>Q3MPV2</accession>
<proteinExistence type="inferred from homology"/>
<sequence>MVAPLVSESQSSSIEETDEQQQQYQQLARRRTIQSDLVDIEAESISSALPEGFNYEKKTTATRFLDKTQKYYPVILNIVHGAIWGVLVRKGLMSLTTYSGSFLSGVIWANFAACVVMGLAIDGEVFWIRLLEEKDYPNKGAIPVYTGLTTGFCGTVSSFSSVILEAFNKAADTDIGVRHHYPNGAYGIMQFLAVILAQFGLSIMGFHMGKQFSAVVDNYLPLVTKRIYKVLELTSMILGVVLVVITCILIGVKKQGSWRSWTFSMLFAPFGALLRYYLSKFLNNKVSNFPLGTFTANFLGTLLLAVFTLLARGKLPGGKGHIVTNTIALHVLEGLDDGFCGGLTTVSTFVVELFGLKTLFSYRYGTISILVCFAGVVLILGSYNWSVGLD</sequence>